<dbReference type="EC" id="2.7.11.1" evidence="2"/>
<dbReference type="EC" id="2.7.2.3" evidence="2"/>
<dbReference type="EMBL" id="AB125189">
    <property type="protein sequence ID" value="BAD51977.1"/>
    <property type="molecule type" value="mRNA"/>
</dbReference>
<dbReference type="RefSeq" id="NP_001274599.1">
    <property type="nucleotide sequence ID" value="NM_001287670.1"/>
</dbReference>
<dbReference type="RefSeq" id="XP_045240285.1">
    <property type="nucleotide sequence ID" value="XM_045384350.2"/>
</dbReference>
<dbReference type="SMR" id="Q60HD8"/>
<dbReference type="STRING" id="9541.ENSMFAP00000016529"/>
<dbReference type="Ensembl" id="ENSMFAT00000067062.2">
    <property type="protein sequence ID" value="ENSMFAP00000016529.1"/>
    <property type="gene ID" value="ENSMFAG00000031271.2"/>
</dbReference>
<dbReference type="GeneID" id="102125491"/>
<dbReference type="VEuPathDB" id="HostDB:ENSMFAG00000031271"/>
<dbReference type="eggNOG" id="KOG1367">
    <property type="taxonomic scope" value="Eukaryota"/>
</dbReference>
<dbReference type="GeneTree" id="ENSGT00390000008820"/>
<dbReference type="OMA" id="DMIFDIG"/>
<dbReference type="UniPathway" id="UPA00109">
    <property type="reaction ID" value="UER00185"/>
</dbReference>
<dbReference type="Proteomes" id="UP000233100">
    <property type="component" value="Chromosome X"/>
</dbReference>
<dbReference type="Bgee" id="ENSMFAG00000031271">
    <property type="expression patterns" value="Expressed in skeletal muscle tissue and 13 other cell types or tissues"/>
</dbReference>
<dbReference type="GO" id="GO:0005829">
    <property type="term" value="C:cytosol"/>
    <property type="evidence" value="ECO:0000250"/>
    <property type="project" value="UniProtKB"/>
</dbReference>
<dbReference type="GO" id="GO:0005759">
    <property type="term" value="C:mitochondrial matrix"/>
    <property type="evidence" value="ECO:0000250"/>
    <property type="project" value="UniProtKB"/>
</dbReference>
<dbReference type="GO" id="GO:0043531">
    <property type="term" value="F:ADP binding"/>
    <property type="evidence" value="ECO:0007669"/>
    <property type="project" value="TreeGrafter"/>
</dbReference>
<dbReference type="GO" id="GO:0005524">
    <property type="term" value="F:ATP binding"/>
    <property type="evidence" value="ECO:0007669"/>
    <property type="project" value="UniProtKB-KW"/>
</dbReference>
<dbReference type="GO" id="GO:0046872">
    <property type="term" value="F:metal ion binding"/>
    <property type="evidence" value="ECO:0007669"/>
    <property type="project" value="UniProtKB-KW"/>
</dbReference>
<dbReference type="GO" id="GO:0004618">
    <property type="term" value="F:phosphoglycerate kinase activity"/>
    <property type="evidence" value="ECO:0007669"/>
    <property type="project" value="UniProtKB-EC"/>
</dbReference>
<dbReference type="GO" id="GO:0106310">
    <property type="term" value="F:protein serine kinase activity"/>
    <property type="evidence" value="ECO:0007669"/>
    <property type="project" value="RHEA"/>
</dbReference>
<dbReference type="GO" id="GO:0006094">
    <property type="term" value="P:gluconeogenesis"/>
    <property type="evidence" value="ECO:0007669"/>
    <property type="project" value="TreeGrafter"/>
</dbReference>
<dbReference type="GO" id="GO:0006096">
    <property type="term" value="P:glycolytic process"/>
    <property type="evidence" value="ECO:0007669"/>
    <property type="project" value="UniProtKB-UniPathway"/>
</dbReference>
<dbReference type="CDD" id="cd00318">
    <property type="entry name" value="Phosphoglycerate_kinase"/>
    <property type="match status" value="1"/>
</dbReference>
<dbReference type="FunFam" id="3.40.50.1260:FF:000019">
    <property type="entry name" value="Phosphoglycerate kinase 1"/>
    <property type="match status" value="1"/>
</dbReference>
<dbReference type="FunFam" id="3.40.50.1260:FF:000031">
    <property type="entry name" value="Phosphoglycerate kinase 1"/>
    <property type="match status" value="1"/>
</dbReference>
<dbReference type="Gene3D" id="3.40.50.1260">
    <property type="entry name" value="Phosphoglycerate kinase, N-terminal domain"/>
    <property type="match status" value="3"/>
</dbReference>
<dbReference type="HAMAP" id="MF_00145">
    <property type="entry name" value="Phosphoglyc_kinase"/>
    <property type="match status" value="1"/>
</dbReference>
<dbReference type="InterPro" id="IPR001576">
    <property type="entry name" value="Phosphoglycerate_kinase"/>
</dbReference>
<dbReference type="InterPro" id="IPR015911">
    <property type="entry name" value="Phosphoglycerate_kinase_CS"/>
</dbReference>
<dbReference type="InterPro" id="IPR015824">
    <property type="entry name" value="Phosphoglycerate_kinase_N"/>
</dbReference>
<dbReference type="InterPro" id="IPR036043">
    <property type="entry name" value="Phosphoglycerate_kinase_sf"/>
</dbReference>
<dbReference type="PANTHER" id="PTHR11406">
    <property type="entry name" value="PHOSPHOGLYCERATE KINASE"/>
    <property type="match status" value="1"/>
</dbReference>
<dbReference type="PANTHER" id="PTHR11406:SF14">
    <property type="entry name" value="PHOSPHOGLYCERATE KINASE 1"/>
    <property type="match status" value="1"/>
</dbReference>
<dbReference type="Pfam" id="PF00162">
    <property type="entry name" value="PGK"/>
    <property type="match status" value="1"/>
</dbReference>
<dbReference type="PIRSF" id="PIRSF000724">
    <property type="entry name" value="Pgk"/>
    <property type="match status" value="1"/>
</dbReference>
<dbReference type="PRINTS" id="PR00477">
    <property type="entry name" value="PHGLYCKINASE"/>
</dbReference>
<dbReference type="SUPFAM" id="SSF53748">
    <property type="entry name" value="Phosphoglycerate kinase"/>
    <property type="match status" value="1"/>
</dbReference>
<dbReference type="PROSITE" id="PS00111">
    <property type="entry name" value="PGLYCERATE_KINASE"/>
    <property type="match status" value="1"/>
</dbReference>
<gene>
    <name type="primary">PGK1</name>
    <name type="ORF">QccE-15495</name>
</gene>
<keyword id="KW-0007">Acetylation</keyword>
<keyword id="KW-0067">ATP-binding</keyword>
<keyword id="KW-0963">Cytoplasm</keyword>
<keyword id="KW-0324">Glycolysis</keyword>
<keyword id="KW-0379">Hydroxylation</keyword>
<keyword id="KW-0418">Kinase</keyword>
<keyword id="KW-0460">Magnesium</keyword>
<keyword id="KW-0479">Metal-binding</keyword>
<keyword id="KW-0496">Mitochondrion</keyword>
<keyword id="KW-0547">Nucleotide-binding</keyword>
<keyword id="KW-0597">Phosphoprotein</keyword>
<keyword id="KW-1185">Reference proteome</keyword>
<keyword id="KW-0808">Transferase</keyword>
<protein>
    <recommendedName>
        <fullName>Phosphoglycerate kinase 1</fullName>
        <ecNumber evidence="2">2.7.11.1</ecNumber>
        <ecNumber evidence="2">2.7.2.3</ecNumber>
    </recommendedName>
</protein>
<organism>
    <name type="scientific">Macaca fascicularis</name>
    <name type="common">Crab-eating macaque</name>
    <name type="synonym">Cynomolgus monkey</name>
    <dbReference type="NCBI Taxonomy" id="9541"/>
    <lineage>
        <taxon>Eukaryota</taxon>
        <taxon>Metazoa</taxon>
        <taxon>Chordata</taxon>
        <taxon>Craniata</taxon>
        <taxon>Vertebrata</taxon>
        <taxon>Euteleostomi</taxon>
        <taxon>Mammalia</taxon>
        <taxon>Eutheria</taxon>
        <taxon>Euarchontoglires</taxon>
        <taxon>Primates</taxon>
        <taxon>Haplorrhini</taxon>
        <taxon>Catarrhini</taxon>
        <taxon>Cercopithecidae</taxon>
        <taxon>Cercopithecinae</taxon>
        <taxon>Macaca</taxon>
    </lineage>
</organism>
<feature type="initiator methionine" description="Removed" evidence="2">
    <location>
        <position position="1"/>
    </location>
</feature>
<feature type="chain" id="PRO_0000145834" description="Phosphoglycerate kinase 1">
    <location>
        <begin position="2"/>
        <end position="417"/>
    </location>
</feature>
<feature type="region of interest" description="Mitochondrial targeting region exposed following cis-trans isomerization by PIN1 and recognized by the TOM complex for mitochondrial translocation of the protein" evidence="2">
    <location>
        <begin position="38"/>
        <end position="43"/>
    </location>
</feature>
<feature type="binding site" evidence="2">
    <location>
        <position position="23"/>
    </location>
    <ligand>
        <name>(2R)-3-phosphoglycerate</name>
        <dbReference type="ChEBI" id="CHEBI:58272"/>
    </ligand>
</feature>
<feature type="binding site" evidence="4">
    <location>
        <position position="24"/>
    </location>
    <ligand>
        <name>(2R)-3-phosphoglycerate</name>
        <dbReference type="ChEBI" id="CHEBI:58272"/>
    </ligand>
</feature>
<feature type="binding site" evidence="2">
    <location>
        <position position="25"/>
    </location>
    <ligand>
        <name>(2R)-3-phosphoglycerate</name>
        <dbReference type="ChEBI" id="CHEBI:58272"/>
    </ligand>
</feature>
<feature type="binding site" evidence="4">
    <location>
        <position position="26"/>
    </location>
    <ligand>
        <name>(2R)-3-phosphoglycerate</name>
        <dbReference type="ChEBI" id="CHEBI:58272"/>
    </ligand>
</feature>
<feature type="binding site" evidence="2">
    <location>
        <position position="38"/>
    </location>
    <ligand>
        <name>(2R)-3-phosphoglycerate</name>
        <dbReference type="ChEBI" id="CHEBI:58272"/>
    </ligand>
</feature>
<feature type="binding site" evidence="4">
    <location>
        <position position="39"/>
    </location>
    <ligand>
        <name>(2R)-3-phosphoglycerate</name>
        <dbReference type="ChEBI" id="CHEBI:58272"/>
    </ligand>
</feature>
<feature type="binding site" evidence="2">
    <location>
        <position position="62"/>
    </location>
    <ligand>
        <name>(2R)-3-phosphoglycerate</name>
        <dbReference type="ChEBI" id="CHEBI:58272"/>
    </ligand>
</feature>
<feature type="binding site" evidence="4">
    <location>
        <position position="63"/>
    </location>
    <ligand>
        <name>(2R)-3-phosphoglycerate</name>
        <dbReference type="ChEBI" id="CHEBI:58272"/>
    </ligand>
</feature>
<feature type="binding site" evidence="2">
    <location>
        <position position="65"/>
    </location>
    <ligand>
        <name>(2R)-3-phosphoglycerate</name>
        <dbReference type="ChEBI" id="CHEBI:58272"/>
    </ligand>
</feature>
<feature type="binding site" evidence="4">
    <location>
        <position position="66"/>
    </location>
    <ligand>
        <name>(2R)-3-phosphoglycerate</name>
        <dbReference type="ChEBI" id="CHEBI:58272"/>
    </ligand>
</feature>
<feature type="binding site" evidence="2">
    <location>
        <position position="122"/>
    </location>
    <ligand>
        <name>(2R)-3-phosphoglycerate</name>
        <dbReference type="ChEBI" id="CHEBI:58272"/>
    </ligand>
</feature>
<feature type="binding site" evidence="4">
    <location>
        <position position="123"/>
    </location>
    <ligand>
        <name>(2R)-3-phosphoglycerate</name>
        <dbReference type="ChEBI" id="CHEBI:58272"/>
    </ligand>
</feature>
<feature type="binding site" evidence="2">
    <location>
        <position position="170"/>
    </location>
    <ligand>
        <name>(2R)-3-phosphoglycerate</name>
        <dbReference type="ChEBI" id="CHEBI:58272"/>
    </ligand>
</feature>
<feature type="binding site" evidence="4">
    <location>
        <position position="171"/>
    </location>
    <ligand>
        <name>(2R)-3-phosphoglycerate</name>
        <dbReference type="ChEBI" id="CHEBI:58272"/>
    </ligand>
</feature>
<feature type="binding site" evidence="2">
    <location>
        <position position="214"/>
    </location>
    <ligand>
        <name>ADP</name>
        <dbReference type="ChEBI" id="CHEBI:456216"/>
    </ligand>
</feature>
<feature type="binding site" evidence="2">
    <location>
        <position position="214"/>
    </location>
    <ligand>
        <name>CDP</name>
        <dbReference type="ChEBI" id="CHEBI:58069"/>
    </ligand>
</feature>
<feature type="binding site" evidence="4">
    <location>
        <position position="215"/>
    </location>
    <ligand>
        <name>AMP</name>
        <dbReference type="ChEBI" id="CHEBI:456215"/>
    </ligand>
</feature>
<feature type="binding site" evidence="4">
    <location>
        <position position="215"/>
    </location>
    <ligand>
        <name>ATP</name>
        <dbReference type="ChEBI" id="CHEBI:30616"/>
    </ligand>
</feature>
<feature type="binding site" evidence="2">
    <location>
        <position position="215"/>
    </location>
    <ligand>
        <name>Mg(2+)</name>
        <dbReference type="ChEBI" id="CHEBI:18420"/>
    </ligand>
</feature>
<feature type="binding site" evidence="4">
    <location>
        <position position="216"/>
    </location>
    <ligand>
        <name>AMP</name>
        <dbReference type="ChEBI" id="CHEBI:456215"/>
    </ligand>
</feature>
<feature type="binding site" evidence="2">
    <location>
        <position position="218"/>
    </location>
    <ligand>
        <name>Mg(2+)</name>
        <dbReference type="ChEBI" id="CHEBI:18420"/>
    </ligand>
</feature>
<feature type="binding site" evidence="2">
    <location>
        <position position="219"/>
    </location>
    <ligand>
        <name>CDP</name>
        <dbReference type="ChEBI" id="CHEBI:58069"/>
    </ligand>
</feature>
<feature type="binding site" evidence="2">
    <location>
        <position position="219"/>
    </location>
    <ligand>
        <name>Mg(2+)</name>
        <dbReference type="ChEBI" id="CHEBI:18420"/>
    </ligand>
</feature>
<feature type="binding site" evidence="4">
    <location>
        <position position="220"/>
    </location>
    <ligand>
        <name>AMP</name>
        <dbReference type="ChEBI" id="CHEBI:456215"/>
    </ligand>
</feature>
<feature type="binding site" evidence="4">
    <location>
        <position position="220"/>
    </location>
    <ligand>
        <name>ATP</name>
        <dbReference type="ChEBI" id="CHEBI:30616"/>
    </ligand>
</feature>
<feature type="binding site" evidence="2">
    <location>
        <position position="238"/>
    </location>
    <ligand>
        <name>ADP</name>
        <dbReference type="ChEBI" id="CHEBI:456216"/>
    </ligand>
</feature>
<feature type="binding site" evidence="2">
    <location>
        <position position="238"/>
    </location>
    <ligand>
        <name>CDP</name>
        <dbReference type="ChEBI" id="CHEBI:58069"/>
    </ligand>
</feature>
<feature type="binding site" evidence="4">
    <location>
        <position position="239"/>
    </location>
    <ligand>
        <name>AMP</name>
        <dbReference type="ChEBI" id="CHEBI:456215"/>
    </ligand>
</feature>
<feature type="binding site" evidence="4">
    <location>
        <position position="239"/>
    </location>
    <ligand>
        <name>ATP</name>
        <dbReference type="ChEBI" id="CHEBI:30616"/>
    </ligand>
</feature>
<feature type="binding site" evidence="4">
    <location>
        <position position="313"/>
    </location>
    <ligand>
        <name>AMP</name>
        <dbReference type="ChEBI" id="CHEBI:456215"/>
    </ligand>
</feature>
<feature type="binding site" evidence="4">
    <location>
        <position position="313"/>
    </location>
    <ligand>
        <name>ATP</name>
        <dbReference type="ChEBI" id="CHEBI:30616"/>
    </ligand>
</feature>
<feature type="binding site" evidence="2">
    <location>
        <position position="338"/>
    </location>
    <ligand>
        <name>CDP</name>
        <dbReference type="ChEBI" id="CHEBI:58069"/>
    </ligand>
</feature>
<feature type="binding site" evidence="2">
    <location>
        <position position="340"/>
    </location>
    <ligand>
        <name>CDP</name>
        <dbReference type="ChEBI" id="CHEBI:58069"/>
    </ligand>
</feature>
<feature type="binding site" evidence="2">
    <location>
        <position position="343"/>
    </location>
    <ligand>
        <name>ADP</name>
        <dbReference type="ChEBI" id="CHEBI:456216"/>
    </ligand>
</feature>
<feature type="binding site" evidence="2">
    <location>
        <position position="343"/>
    </location>
    <ligand>
        <name>CDP</name>
        <dbReference type="ChEBI" id="CHEBI:58069"/>
    </ligand>
</feature>
<feature type="binding site" evidence="4">
    <location>
        <position position="344"/>
    </location>
    <ligand>
        <name>AMP</name>
        <dbReference type="ChEBI" id="CHEBI:456215"/>
    </ligand>
</feature>
<feature type="binding site" evidence="4">
    <location>
        <position position="344"/>
    </location>
    <ligand>
        <name>ATP</name>
        <dbReference type="ChEBI" id="CHEBI:30616"/>
    </ligand>
</feature>
<feature type="binding site" evidence="4">
    <location>
        <position position="375"/>
    </location>
    <ligand>
        <name>ATP</name>
        <dbReference type="ChEBI" id="CHEBI:30616"/>
    </ligand>
</feature>
<feature type="binding site" evidence="4">
    <location>
        <position position="375"/>
    </location>
    <ligand>
        <name>Mg(2+)</name>
        <dbReference type="ChEBI" id="CHEBI:18420"/>
    </ligand>
</feature>
<feature type="binding site" evidence="4">
    <location>
        <position position="376"/>
    </location>
    <ligand>
        <name>ATP</name>
        <dbReference type="ChEBI" id="CHEBI:30616"/>
    </ligand>
</feature>
<feature type="modified residue" description="N-acetylserine" evidence="2">
    <location>
        <position position="2"/>
    </location>
</feature>
<feature type="modified residue" description="Phosphoserine" evidence="2">
    <location>
        <position position="2"/>
    </location>
</feature>
<feature type="modified residue" description="Phosphoserine" evidence="2">
    <location>
        <position position="4"/>
    </location>
</feature>
<feature type="modified residue" description="N6-succinyllysine" evidence="3">
    <location>
        <position position="6"/>
    </location>
</feature>
<feature type="modified residue" description="N6-acetyllysine" evidence="2">
    <location>
        <position position="11"/>
    </location>
</feature>
<feature type="modified residue" description="N6-acetyllysine; alternate" evidence="2">
    <location>
        <position position="48"/>
    </location>
</feature>
<feature type="modified residue" description="N6-succinyllysine; alternate" evidence="3">
    <location>
        <position position="48"/>
    </location>
</feature>
<feature type="modified residue" description="N6-acetyllysine" evidence="2">
    <location>
        <position position="75"/>
    </location>
</feature>
<feature type="modified residue" description="Phosphotyrosine" evidence="3">
    <location>
        <position position="76"/>
    </location>
</feature>
<feature type="modified residue" description="N6-acetyllysine" evidence="2">
    <location>
        <position position="86"/>
    </location>
</feature>
<feature type="modified residue" description="N6-acetyllysine" evidence="3">
    <location>
        <position position="91"/>
    </location>
</feature>
<feature type="modified residue" description="N6-(2-hydroxyisobutyryl)lysine; alternate" evidence="2">
    <location>
        <position position="97"/>
    </location>
</feature>
<feature type="modified residue" description="N6-acetyllysine; alternate" evidence="2">
    <location>
        <position position="97"/>
    </location>
</feature>
<feature type="modified residue" description="N6-acetyllysine; alternate" evidence="2">
    <location>
        <position position="131"/>
    </location>
</feature>
<feature type="modified residue" description="N6-malonyllysine; alternate" evidence="1">
    <location>
        <position position="131"/>
    </location>
</feature>
<feature type="modified residue" description="N6-acetyllysine" evidence="2">
    <location>
        <position position="146"/>
    </location>
</feature>
<feature type="modified residue" description="N6-succinyllysine" evidence="3">
    <location>
        <position position="191"/>
    </location>
</feature>
<feature type="modified residue" description="Phosphotyrosine" evidence="2">
    <location>
        <position position="196"/>
    </location>
</feature>
<feature type="modified residue" description="N6-acetyllysine" evidence="2">
    <location>
        <position position="199"/>
    </location>
</feature>
<feature type="modified residue" description="Phosphoserine" evidence="2">
    <location>
        <position position="203"/>
    </location>
</feature>
<feature type="modified residue" description="N6-(2-hydroxyisobutyryl)lysine" evidence="2">
    <location>
        <position position="216"/>
    </location>
</feature>
<feature type="modified residue" description="N6-(2-hydroxyisobutyryl)lysine" evidence="2">
    <location>
        <position position="220"/>
    </location>
</feature>
<feature type="modified residue" description="N6-acetyllysine" evidence="2">
    <location>
        <position position="267"/>
    </location>
</feature>
<feature type="modified residue" description="N6-acetyllysine" evidence="2">
    <location>
        <position position="291"/>
    </location>
</feature>
<feature type="modified residue" description="N6-(2-hydroxyisobutyryl)lysine" evidence="2">
    <location>
        <position position="323"/>
    </location>
</feature>
<feature type="modified residue" description="N6-acetyllysine" evidence="3">
    <location>
        <position position="361"/>
    </location>
</feature>
<sequence length="417" mass="44587">MSLSNKLTLDKLDVKGKRVVMRVDFNVPMKNNQITNNQRIKAAVPSIKFCLDNGAKSVVLMSHLGRPDGVPMPDKYSLEPVAVELKSLLGKDVLFLKDCVGPEVEKACANPAAGSVILLENLRFHVEEEGKGKDASGNKVKAEPAKIEAFRASLSKLGDVYVNDAFGTAHRAHSSMVGVNLPQKAGGFLMKKELNYFAKALESPERPFLAILGGAKVADKIQLINNMLDKVNEMIIGGGMAFTFLKVLNNMEIGTSLFDEEGAKIVKDLMSKAEKNGVKITLPVDFVTADKFDENAKTGQATVASGIPAGWMGLDCGPESSKKYAEAVTRAKQIVWNGPVGVFEWEAFAQGTKALMDEVVKATSRGCITIIGGGDTATCCAKWNTEDKVSHVSTGGGASLELLEGKVLPGVDALSNI</sequence>
<proteinExistence type="evidence at transcript level"/>
<name>PGK1_MACFA</name>
<accession>Q60HD8</accession>
<comment type="function">
    <text evidence="2">Catalyzes one of the two ATP producing reactions in the glycolytic pathway via the reversible conversion of 1,3-diphosphoglycerate to 3-phosphoglycerate. Both L- and D- forms of purine and pyrimidine nucleotides can be used as substrates, but the activity is much lower on pyrimidines. In addition to its role as a glycolytic enzyme, it seems that PGK-1 acts as a polymerase alpha cofactor protein (primer recognition protein). Acts as a protein kinase when localized to the mitochondrion where it phosphorylates pyruvate dehydrogenase kinase PDK1 to inhibit pyruvate dehydrogenase complex activity and suppress the formation of acetyl-coenzyme A from pyruvate, and consequently inhibit oxidative phosphorylation and promote glycolysis. May play a role in sperm motility.</text>
</comment>
<comment type="catalytic activity">
    <reaction evidence="2">
        <text>(2R)-3-phosphoglycerate + ATP = (2R)-3-phospho-glyceroyl phosphate + ADP</text>
        <dbReference type="Rhea" id="RHEA:14801"/>
        <dbReference type="ChEBI" id="CHEBI:30616"/>
        <dbReference type="ChEBI" id="CHEBI:57604"/>
        <dbReference type="ChEBI" id="CHEBI:58272"/>
        <dbReference type="ChEBI" id="CHEBI:456216"/>
        <dbReference type="EC" id="2.7.2.3"/>
    </reaction>
</comment>
<comment type="catalytic activity">
    <reaction evidence="2">
        <text>L-seryl-[protein] + ATP = O-phospho-L-seryl-[protein] + ADP + H(+)</text>
        <dbReference type="Rhea" id="RHEA:17989"/>
        <dbReference type="Rhea" id="RHEA-COMP:9863"/>
        <dbReference type="Rhea" id="RHEA-COMP:11604"/>
        <dbReference type="ChEBI" id="CHEBI:15378"/>
        <dbReference type="ChEBI" id="CHEBI:29999"/>
        <dbReference type="ChEBI" id="CHEBI:30616"/>
        <dbReference type="ChEBI" id="CHEBI:83421"/>
        <dbReference type="ChEBI" id="CHEBI:456216"/>
        <dbReference type="EC" id="2.7.11.1"/>
    </reaction>
</comment>
<comment type="cofactor">
    <cofactor evidence="2">
        <name>Mg(2+)</name>
        <dbReference type="ChEBI" id="CHEBI:18420"/>
    </cofactor>
</comment>
<comment type="pathway">
    <text evidence="2">Carbohydrate degradation; glycolysis; pyruvate from D-glyceraldehyde 3-phosphate: step 2/5.</text>
</comment>
<comment type="subunit">
    <text evidence="2">Monomer. Interacts with kinase MAPK1/ERK2; the interaction is direct, occurs under hypoxic conditions, and promotes its interaction with PIN1. Interacts with peptidyl-prolyl cis-trans isomerase PIN1; the interaction is direct, occurs under hypoxic conditions, and targets the protein to the mitochondrion by promoting interactions with the TOM complex. Interacts with mitochondrial circRNA mcPGK1 (via its 2nd stem-loop); the interaction is direct and targets the protein to the mitochondrion by promoting interactions with the TOM complex. Interacts with pyruvate dehydrogenase kinase PDK1; the interaction is direct, occurs under hypoxic conditions and leads to PDK1-mediated inhibition of pyruvate dehydrogenase complex activity.</text>
</comment>
<comment type="subcellular location">
    <subcellularLocation>
        <location evidence="2">Cytoplasm</location>
        <location evidence="2">Cytosol</location>
    </subcellularLocation>
    <subcellularLocation>
        <location evidence="2">Mitochondrion matrix</location>
    </subcellularLocation>
    <text evidence="2">Hypoxic conditions promote mitochondrial targeting. Targeted to the mitochondrion following phosphorylation by MAPK1/ERK2, cis-trans isomerization by PIN1, and binding to mitochondrial circRNA mcPGK1.</text>
</comment>
<comment type="PTM">
    <text evidence="2">Phosphorylated at Ser-203 by MAPK1/ERK2 under hypoxic conditions, which promotes its mitochondrial targeting.</text>
</comment>
<comment type="similarity">
    <text evidence="5">Belongs to the phosphoglycerate kinase family.</text>
</comment>
<reference key="1">
    <citation type="submission" date="2003-10" db="EMBL/GenBank/DDBJ databases">
        <title>Isolation and characterization of cDNA for macaque neurological disease genes.</title>
        <authorList>
            <person name="Kusuda J."/>
            <person name="Osada N."/>
            <person name="Tanuma R."/>
            <person name="Hirata M."/>
            <person name="Sugano S."/>
            <person name="Hashimoto K."/>
        </authorList>
    </citation>
    <scope>NUCLEOTIDE SEQUENCE [LARGE SCALE MRNA]</scope>
    <source>
        <tissue>Brain cortex</tissue>
    </source>
</reference>
<evidence type="ECO:0000250" key="1"/>
<evidence type="ECO:0000250" key="2">
    <source>
        <dbReference type="UniProtKB" id="P00558"/>
    </source>
</evidence>
<evidence type="ECO:0000250" key="3">
    <source>
        <dbReference type="UniProtKB" id="P09411"/>
    </source>
</evidence>
<evidence type="ECO:0000250" key="4">
    <source>
        <dbReference type="UniProtKB" id="Q7SIB7"/>
    </source>
</evidence>
<evidence type="ECO:0000305" key="5"/>